<sequence>MAASPVLAVDNSSVAADQLKSIIERIERLEEEKAGLAGDIKDVYAEAKANGFDTKVLRKIISIRKRDHEERQEEEAILELYMQALGMA</sequence>
<name>Y5968_METNO</name>
<dbReference type="EMBL" id="CP001349">
    <property type="protein sequence ID" value="ACL60795.1"/>
    <property type="molecule type" value="Genomic_DNA"/>
</dbReference>
<dbReference type="RefSeq" id="WP_015932389.1">
    <property type="nucleotide sequence ID" value="NC_011894.1"/>
</dbReference>
<dbReference type="SMR" id="B8ITT7"/>
<dbReference type="STRING" id="460265.Mnod_5968"/>
<dbReference type="KEGG" id="mno:Mnod_5968"/>
<dbReference type="eggNOG" id="COG3750">
    <property type="taxonomic scope" value="Bacteria"/>
</dbReference>
<dbReference type="HOGENOM" id="CLU_158651_3_0_5"/>
<dbReference type="OrthoDB" id="9813793at2"/>
<dbReference type="Proteomes" id="UP000008207">
    <property type="component" value="Chromosome"/>
</dbReference>
<dbReference type="GO" id="GO:0003677">
    <property type="term" value="F:DNA binding"/>
    <property type="evidence" value="ECO:0007669"/>
    <property type="project" value="InterPro"/>
</dbReference>
<dbReference type="Gene3D" id="1.10.10.10">
    <property type="entry name" value="Winged helix-like DNA-binding domain superfamily/Winged helix DNA-binding domain"/>
    <property type="match status" value="1"/>
</dbReference>
<dbReference type="HAMAP" id="MF_00797">
    <property type="entry name" value="UPF0335"/>
    <property type="match status" value="1"/>
</dbReference>
<dbReference type="InterPro" id="IPR018753">
    <property type="entry name" value="GapR-like"/>
</dbReference>
<dbReference type="InterPro" id="IPR046367">
    <property type="entry name" value="GapR-like_DNA-bd"/>
</dbReference>
<dbReference type="InterPro" id="IPR036388">
    <property type="entry name" value="WH-like_DNA-bd_sf"/>
</dbReference>
<dbReference type="NCBIfam" id="NF010247">
    <property type="entry name" value="PRK13694.1"/>
    <property type="match status" value="1"/>
</dbReference>
<dbReference type="Pfam" id="PF10073">
    <property type="entry name" value="GapR_DNA-bd"/>
    <property type="match status" value="1"/>
</dbReference>
<reference key="1">
    <citation type="submission" date="2009-01" db="EMBL/GenBank/DDBJ databases">
        <title>Complete sequence of chromosome of Methylobacterium nodulans ORS 2060.</title>
        <authorList>
            <consortium name="US DOE Joint Genome Institute"/>
            <person name="Lucas S."/>
            <person name="Copeland A."/>
            <person name="Lapidus A."/>
            <person name="Glavina del Rio T."/>
            <person name="Dalin E."/>
            <person name="Tice H."/>
            <person name="Bruce D."/>
            <person name="Goodwin L."/>
            <person name="Pitluck S."/>
            <person name="Sims D."/>
            <person name="Brettin T."/>
            <person name="Detter J.C."/>
            <person name="Han C."/>
            <person name="Larimer F."/>
            <person name="Land M."/>
            <person name="Hauser L."/>
            <person name="Kyrpides N."/>
            <person name="Ivanova N."/>
            <person name="Marx C.J."/>
            <person name="Richardson P."/>
        </authorList>
    </citation>
    <scope>NUCLEOTIDE SEQUENCE [LARGE SCALE GENOMIC DNA]</scope>
    <source>
        <strain>LMG 21967 / CNCM I-2342 / ORS 2060</strain>
    </source>
</reference>
<organism>
    <name type="scientific">Methylobacterium nodulans (strain LMG 21967 / CNCM I-2342 / ORS 2060)</name>
    <dbReference type="NCBI Taxonomy" id="460265"/>
    <lineage>
        <taxon>Bacteria</taxon>
        <taxon>Pseudomonadati</taxon>
        <taxon>Pseudomonadota</taxon>
        <taxon>Alphaproteobacteria</taxon>
        <taxon>Hyphomicrobiales</taxon>
        <taxon>Methylobacteriaceae</taxon>
        <taxon>Methylobacterium</taxon>
    </lineage>
</organism>
<evidence type="ECO:0000255" key="1">
    <source>
        <dbReference type="HAMAP-Rule" id="MF_00797"/>
    </source>
</evidence>
<proteinExistence type="inferred from homology"/>
<gene>
    <name type="ordered locus">Mnod_5968</name>
</gene>
<keyword id="KW-1185">Reference proteome</keyword>
<protein>
    <recommendedName>
        <fullName evidence="1">UPF0335 protein Mnod_5968</fullName>
    </recommendedName>
</protein>
<feature type="chain" id="PRO_1000148523" description="UPF0335 protein Mnod_5968">
    <location>
        <begin position="1"/>
        <end position="88"/>
    </location>
</feature>
<accession>B8ITT7</accession>
<comment type="similarity">
    <text evidence="1">Belongs to the UPF0335 family.</text>
</comment>